<protein>
    <recommendedName>
        <fullName evidence="4">DNA replication complex GINS protein SLD5</fullName>
    </recommendedName>
    <alternativeName>
        <fullName>GINS complex subunit 4</fullName>
    </alternativeName>
</protein>
<proteinExistence type="evidence at protein level"/>
<reference key="1">
    <citation type="journal article" date="2003" name="Genes Dev.">
        <title>A novel ring-like complex of Xenopus proteins essential for the initiation of DNA replication.</title>
        <authorList>
            <person name="Kubota Y."/>
            <person name="Takase Y."/>
            <person name="Komori Y."/>
            <person name="Hashimoto Y."/>
            <person name="Arata T."/>
            <person name="Kamimura Y."/>
            <person name="Araki H."/>
            <person name="Takisawa H."/>
        </authorList>
    </citation>
    <scope>NUCLEOTIDE SEQUENCE [GENOMIC DNA]</scope>
    <scope>FUNCTION</scope>
    <scope>IDENTIFICATION IN THE GINS COMPLEX</scope>
    <scope>SUBCELLULAR LOCATION</scope>
</reference>
<reference evidence="8" key="2">
    <citation type="journal article" date="2016" name="Nature">
        <title>Genome evolution in the allotetraploid frog Xenopus laevis.</title>
        <authorList>
            <person name="Session A.M."/>
            <person name="Uno Y."/>
            <person name="Kwon T."/>
            <person name="Chapman J.A."/>
            <person name="Toyoda A."/>
            <person name="Takahashi S."/>
            <person name="Fukui A."/>
            <person name="Hikosaka A."/>
            <person name="Suzuki A."/>
            <person name="Kondo M."/>
            <person name="van Heeringen S.J."/>
            <person name="Quigley I."/>
            <person name="Heinz S."/>
            <person name="Ogino H."/>
            <person name="Ochi H."/>
            <person name="Hellsten U."/>
            <person name="Lyons J.B."/>
            <person name="Simakov O."/>
            <person name="Putnam N."/>
            <person name="Stites J."/>
            <person name="Kuroki Y."/>
            <person name="Tanaka T."/>
            <person name="Michiue T."/>
            <person name="Watanabe M."/>
            <person name="Bogdanovic O."/>
            <person name="Lister R."/>
            <person name="Georgiou G."/>
            <person name="Paranjpe S.S."/>
            <person name="van Kruijsbergen I."/>
            <person name="Shu S."/>
            <person name="Carlson J."/>
            <person name="Kinoshita T."/>
            <person name="Ohta Y."/>
            <person name="Mawaribuchi S."/>
            <person name="Jenkins J."/>
            <person name="Grimwood J."/>
            <person name="Schmutz J."/>
            <person name="Mitros T."/>
            <person name="Mozaffari S.V."/>
            <person name="Suzuki Y."/>
            <person name="Haramoto Y."/>
            <person name="Yamamoto T.S."/>
            <person name="Takagi C."/>
            <person name="Heald R."/>
            <person name="Miller K."/>
            <person name="Haudenschild C."/>
            <person name="Kitzman J."/>
            <person name="Nakayama T."/>
            <person name="Izutsu Y."/>
            <person name="Robert J."/>
            <person name="Fortriede J."/>
            <person name="Burns K."/>
            <person name="Lotay V."/>
            <person name="Karimi K."/>
            <person name="Yasuoka Y."/>
            <person name="Dichmann D.S."/>
            <person name="Flajnik M.F."/>
            <person name="Houston D.W."/>
            <person name="Shendure J."/>
            <person name="DuPasquier L."/>
            <person name="Vize P.D."/>
            <person name="Zorn A.M."/>
            <person name="Ito M."/>
            <person name="Marcotte E.M."/>
            <person name="Wallingford J.B."/>
            <person name="Ito Y."/>
            <person name="Asashima M."/>
            <person name="Ueno N."/>
            <person name="Matsuda Y."/>
            <person name="Veenstra G.J."/>
            <person name="Fujiyama A."/>
            <person name="Harland R.M."/>
            <person name="Taira M."/>
            <person name="Rokhsar D.S."/>
        </authorList>
    </citation>
    <scope>NUCLEOTIDE SEQUENCE [LARGE SCALE GENOMIC DNA]</scope>
    <source>
        <strain>J</strain>
    </source>
</reference>
<reference key="3">
    <citation type="submission" date="2004-04" db="EMBL/GenBank/DDBJ databases">
        <authorList>
            <consortium name="NIH - Xenopus Gene Collection (XGC) project"/>
        </authorList>
    </citation>
    <scope>NUCLEOTIDE SEQUENCE [LARGE SCALE MRNA]</scope>
    <source>
        <tissue>Ovary</tissue>
    </source>
</reference>
<reference key="4">
    <citation type="journal article" date="2019" name="Life. Sci Alliance">
        <title>Mitotic replisome disassembly depends on TRAIP ubiquitin ligase activity.</title>
        <authorList>
            <person name="Priego Moreno S."/>
            <person name="Jones R.M."/>
            <person name="Poovathumkadavil D."/>
            <person name="Scaramuzza S."/>
            <person name="Gambus A."/>
        </authorList>
    </citation>
    <scope>IDENTIFICATION IN THE CMG HELICASE COMPLEX</scope>
</reference>
<reference key="5">
    <citation type="journal article" date="2019" name="Nature">
        <title>TRAIP is a master regulator of DNA interstrand crosslink repair.</title>
        <authorList>
            <person name="Wu R.A."/>
            <person name="Semlow D.R."/>
            <person name="Kamimae-Lanning A.N."/>
            <person name="Kochenova O.V."/>
            <person name="Chistol G."/>
            <person name="Hodskinson M.R."/>
            <person name="Amunugama R."/>
            <person name="Sparks J.L."/>
            <person name="Wang M."/>
            <person name="Deng L."/>
            <person name="Mimoso C.A."/>
            <person name="Low E."/>
            <person name="Patel K.J."/>
            <person name="Walter J.C."/>
        </authorList>
    </citation>
    <scope>IDENTIFICATION IN THE CMG HELICASE COMPLEX</scope>
</reference>
<gene>
    <name evidence="9" type="primary">gins4</name>
    <name evidence="6" type="synonym">Sld5</name>
    <name evidence="7" type="ORF">XELAEV_18018778mg</name>
</gene>
<comment type="function">
    <text evidence="2">Required for initiation of chromosomal DNA replication. Core component of CDC45-MCM-GINS (CMG) helicase, the molecular machine that unwinds template DNA during replication, and around which the replisome is built.</text>
</comment>
<comment type="subunit">
    <text evidence="2 3 5">Component of the GINS complex which is a heterotetramer of gins1/psf1, gins2/psf2, gins3/psf3 and gins4/sld5 (PubMed:12730133). Component of the CMG helicase complex, composed of the mcm2-7 complex, the GINS complex and cdc45 (Probable) (PubMed:30979826).</text>
</comment>
<comment type="subcellular location">
    <subcellularLocation>
        <location evidence="2">Nucleus</location>
    </subcellularLocation>
    <subcellularLocation>
        <location evidence="2">Chromosome</location>
    </subcellularLocation>
    <subcellularLocation>
        <location evidence="1">Cytoplasm</location>
    </subcellularLocation>
</comment>
<comment type="similarity">
    <text evidence="4">Belongs to the GINS4/SLD5 family.</text>
</comment>
<dbReference type="EMBL" id="AB097167">
    <property type="protein sequence ID" value="BAC66457.1"/>
    <property type="molecule type" value="Genomic_DNA"/>
</dbReference>
<dbReference type="EMBL" id="CM004470">
    <property type="protein sequence ID" value="OCT90162.1"/>
    <property type="molecule type" value="Genomic_DNA"/>
</dbReference>
<dbReference type="EMBL" id="BC068670">
    <property type="protein sequence ID" value="AAH68670.1"/>
    <property type="molecule type" value="mRNA"/>
</dbReference>
<dbReference type="RefSeq" id="NP_001084702.1">
    <property type="nucleotide sequence ID" value="NM_001091233.1"/>
</dbReference>
<dbReference type="RefSeq" id="XP_018106356.1">
    <property type="nucleotide sequence ID" value="XM_018250867.1"/>
</dbReference>
<dbReference type="RefSeq" id="XP_018106357.1">
    <property type="nucleotide sequence ID" value="XM_018250868.1"/>
</dbReference>
<dbReference type="PDB" id="8Q6O">
    <property type="method" value="EM"/>
    <property type="resolution" value="3.14 A"/>
    <property type="chains" value="K/Q=1-221"/>
</dbReference>
<dbReference type="PDBsum" id="8Q6O"/>
<dbReference type="EMDB" id="EMD-18191"/>
<dbReference type="EMDB" id="EMD-18195"/>
<dbReference type="SMR" id="Q7ZT48"/>
<dbReference type="STRING" id="8355.Q7ZT48"/>
<dbReference type="PaxDb" id="8355-Q7ZT48"/>
<dbReference type="DNASU" id="414663"/>
<dbReference type="GeneID" id="414663"/>
<dbReference type="KEGG" id="xla:414663"/>
<dbReference type="AGR" id="Xenbase:XB-GENE-949843"/>
<dbReference type="CTD" id="414663"/>
<dbReference type="Xenbase" id="XB-GENE-949843">
    <property type="gene designation" value="gins4.L"/>
</dbReference>
<dbReference type="OMA" id="ILETAWI"/>
<dbReference type="OrthoDB" id="338231at2759"/>
<dbReference type="Proteomes" id="UP000186698">
    <property type="component" value="Chromosome 3L"/>
</dbReference>
<dbReference type="Proteomes" id="UP000694892">
    <property type="component" value="Chromosome 3L"/>
</dbReference>
<dbReference type="Bgee" id="414663">
    <property type="expression patterns" value="Expressed in ovary and 19 other cell types or tissues"/>
</dbReference>
<dbReference type="GO" id="GO:0071162">
    <property type="term" value="C:CMG complex"/>
    <property type="evidence" value="ECO:0000314"/>
    <property type="project" value="UniProtKB"/>
</dbReference>
<dbReference type="GO" id="GO:0005737">
    <property type="term" value="C:cytoplasm"/>
    <property type="evidence" value="ECO:0007669"/>
    <property type="project" value="UniProtKB-SubCell"/>
</dbReference>
<dbReference type="GO" id="GO:0000811">
    <property type="term" value="C:GINS complex"/>
    <property type="evidence" value="ECO:0000353"/>
    <property type="project" value="UniProtKB"/>
</dbReference>
<dbReference type="GO" id="GO:0005634">
    <property type="term" value="C:nucleus"/>
    <property type="evidence" value="ECO:0000314"/>
    <property type="project" value="UniProtKB"/>
</dbReference>
<dbReference type="GO" id="GO:0003682">
    <property type="term" value="F:chromatin binding"/>
    <property type="evidence" value="ECO:0000314"/>
    <property type="project" value="UniProtKB"/>
</dbReference>
<dbReference type="GO" id="GO:0006260">
    <property type="term" value="P:DNA replication"/>
    <property type="evidence" value="ECO:0000315"/>
    <property type="project" value="UniProtKB"/>
</dbReference>
<dbReference type="GO" id="GO:0006261">
    <property type="term" value="P:DNA-templated DNA replication"/>
    <property type="evidence" value="ECO:0007669"/>
    <property type="project" value="InterPro"/>
</dbReference>
<dbReference type="GO" id="GO:0000727">
    <property type="term" value="P:double-strand break repair via break-induced replication"/>
    <property type="evidence" value="ECO:0000318"/>
    <property type="project" value="GO_Central"/>
</dbReference>
<dbReference type="CDD" id="cd11711">
    <property type="entry name" value="GINS_A_Sld5"/>
    <property type="match status" value="1"/>
</dbReference>
<dbReference type="CDD" id="cd21692">
    <property type="entry name" value="GINS_B_Sld5"/>
    <property type="match status" value="1"/>
</dbReference>
<dbReference type="FunFam" id="1.20.58.1030:FF:000002">
    <property type="entry name" value="DNA replication complex GINS protein SLD5"/>
    <property type="match status" value="1"/>
</dbReference>
<dbReference type="FunFam" id="3.40.5.60:FF:000001">
    <property type="entry name" value="DNA replication complex GINS protein SLD5"/>
    <property type="match status" value="1"/>
</dbReference>
<dbReference type="Gene3D" id="1.20.58.1030">
    <property type="match status" value="1"/>
</dbReference>
<dbReference type="Gene3D" id="3.40.5.60">
    <property type="match status" value="1"/>
</dbReference>
<dbReference type="InterPro" id="IPR021151">
    <property type="entry name" value="GINS_A"/>
</dbReference>
<dbReference type="InterPro" id="IPR036224">
    <property type="entry name" value="GINS_bundle-like_dom_sf"/>
</dbReference>
<dbReference type="InterPro" id="IPR008591">
    <property type="entry name" value="GINS_Sld5"/>
</dbReference>
<dbReference type="InterPro" id="IPR031633">
    <property type="entry name" value="SLD5_C"/>
</dbReference>
<dbReference type="InterPro" id="IPR038749">
    <property type="entry name" value="Sld5_GINS_A"/>
</dbReference>
<dbReference type="PANTHER" id="PTHR21206:SF0">
    <property type="entry name" value="DNA REPLICATION COMPLEX GINS PROTEIN SLD5"/>
    <property type="match status" value="1"/>
</dbReference>
<dbReference type="PANTHER" id="PTHR21206">
    <property type="entry name" value="SLD5 PROTEIN"/>
    <property type="match status" value="1"/>
</dbReference>
<dbReference type="Pfam" id="PF05916">
    <property type="entry name" value="Sld5"/>
    <property type="match status" value="1"/>
</dbReference>
<dbReference type="Pfam" id="PF16922">
    <property type="entry name" value="SLD5_C"/>
    <property type="match status" value="1"/>
</dbReference>
<dbReference type="PIRSF" id="PIRSF007764">
    <property type="entry name" value="Sld5"/>
    <property type="match status" value="1"/>
</dbReference>
<dbReference type="SUPFAM" id="SSF158573">
    <property type="entry name" value="GINS helical bundle-like"/>
    <property type="match status" value="1"/>
</dbReference>
<dbReference type="SUPFAM" id="SSF160059">
    <property type="entry name" value="PriA/YqbF domain"/>
    <property type="match status" value="1"/>
</dbReference>
<accession>Q7ZT48</accession>
<keyword id="KW-0002">3D-structure</keyword>
<keyword id="KW-0158">Chromosome</keyword>
<keyword id="KW-0963">Cytoplasm</keyword>
<keyword id="KW-0235">DNA replication</keyword>
<keyword id="KW-0539">Nucleus</keyword>
<keyword id="KW-1185">Reference proteome</keyword>
<sequence>MEDELALSDQGSDEDEEVLTPAELINKLEEAWLNEKFAPELLESKSEVVECVMEQLNHMEQNLHRAKPGDLKISFHHMEIERIRYMLSSYLRSRMLKIEKFFPHILEKEKSRGEGEPPHLSPEEFAFAKEYMTNTETLLKSVALRHMPPNLQTVDLLKSVPKPNLDSFVFLRVKEEQNNILVEPETDEQSEYAIDMEVGSQHLIRYRTIAPLVASGAVKLI</sequence>
<feature type="chain" id="PRO_0000451425" description="DNA replication complex GINS protein SLD5">
    <location>
        <begin position="1"/>
        <end position="221"/>
    </location>
</feature>
<feature type="helix" evidence="10">
    <location>
        <begin position="21"/>
        <end position="36"/>
    </location>
</feature>
<feature type="helix" evidence="10">
    <location>
        <begin position="46"/>
        <end position="65"/>
    </location>
</feature>
<feature type="helix" evidence="10">
    <location>
        <begin position="71"/>
        <end position="100"/>
    </location>
</feature>
<feature type="helix" evidence="10">
    <location>
        <begin position="102"/>
        <end position="110"/>
    </location>
</feature>
<feature type="helix" evidence="10">
    <location>
        <begin position="122"/>
        <end position="142"/>
    </location>
</feature>
<feature type="helix" evidence="10">
    <location>
        <begin position="144"/>
        <end position="146"/>
    </location>
</feature>
<feature type="strand" evidence="10">
    <location>
        <begin position="149"/>
        <end position="151"/>
    </location>
</feature>
<feature type="turn" evidence="10">
    <location>
        <begin position="156"/>
        <end position="159"/>
    </location>
</feature>
<feature type="strand" evidence="10">
    <location>
        <begin position="168"/>
        <end position="175"/>
    </location>
</feature>
<feature type="strand" evidence="10">
    <location>
        <begin position="177"/>
        <end position="183"/>
    </location>
</feature>
<feature type="strand" evidence="10">
    <location>
        <begin position="193"/>
        <end position="196"/>
    </location>
</feature>
<feature type="strand" evidence="10">
    <location>
        <begin position="201"/>
        <end position="205"/>
    </location>
</feature>
<feature type="turn" evidence="10">
    <location>
        <begin position="206"/>
        <end position="209"/>
    </location>
</feature>
<feature type="helix" evidence="10">
    <location>
        <begin position="210"/>
        <end position="214"/>
    </location>
</feature>
<feature type="strand" evidence="10">
    <location>
        <begin position="217"/>
        <end position="219"/>
    </location>
</feature>
<name>SLD5_XENLA</name>
<organism>
    <name type="scientific">Xenopus laevis</name>
    <name type="common">African clawed frog</name>
    <dbReference type="NCBI Taxonomy" id="8355"/>
    <lineage>
        <taxon>Eukaryota</taxon>
        <taxon>Metazoa</taxon>
        <taxon>Chordata</taxon>
        <taxon>Craniata</taxon>
        <taxon>Vertebrata</taxon>
        <taxon>Euteleostomi</taxon>
        <taxon>Amphibia</taxon>
        <taxon>Batrachia</taxon>
        <taxon>Anura</taxon>
        <taxon>Pipoidea</taxon>
        <taxon>Pipidae</taxon>
        <taxon>Xenopodinae</taxon>
        <taxon>Xenopus</taxon>
        <taxon>Xenopus</taxon>
    </lineage>
</organism>
<evidence type="ECO:0000250" key="1">
    <source>
        <dbReference type="UniProtKB" id="Q99LZ3"/>
    </source>
</evidence>
<evidence type="ECO:0000269" key="2">
    <source>
    </source>
</evidence>
<evidence type="ECO:0000269" key="3">
    <source>
    </source>
</evidence>
<evidence type="ECO:0000305" key="4"/>
<evidence type="ECO:0000305" key="5">
    <source>
    </source>
</evidence>
<evidence type="ECO:0000312" key="6">
    <source>
        <dbReference type="EMBL" id="BAC66457.1"/>
    </source>
</evidence>
<evidence type="ECO:0000312" key="7">
    <source>
        <dbReference type="EMBL" id="OCT90162.1"/>
    </source>
</evidence>
<evidence type="ECO:0000312" key="8">
    <source>
        <dbReference type="Proteomes" id="UP000186698"/>
    </source>
</evidence>
<evidence type="ECO:0000312" key="9">
    <source>
        <dbReference type="Xenbase" id="XB-GENE-949843"/>
    </source>
</evidence>
<evidence type="ECO:0007829" key="10">
    <source>
        <dbReference type="PDB" id="8Q6O"/>
    </source>
</evidence>